<protein>
    <recommendedName>
        <fullName evidence="1">Adenylosuccinate synthetase</fullName>
        <shortName evidence="1">AMPSase</shortName>
        <shortName evidence="1">AdSS</shortName>
        <ecNumber evidence="1">6.3.4.4</ecNumber>
    </recommendedName>
    <alternativeName>
        <fullName evidence="1">IMP--aspartate ligase</fullName>
    </alternativeName>
</protein>
<reference key="1">
    <citation type="journal article" date="2012" name="Environ. Microbiol.">
        <title>The genome sequence of Desulfatibacillum alkenivorans AK-01: a blueprint for anaerobic alkane oxidation.</title>
        <authorList>
            <person name="Callaghan A.V."/>
            <person name="Morris B.E."/>
            <person name="Pereira I.A."/>
            <person name="McInerney M.J."/>
            <person name="Austin R.N."/>
            <person name="Groves J.T."/>
            <person name="Kukor J.J."/>
            <person name="Suflita J.M."/>
            <person name="Young L.Y."/>
            <person name="Zylstra G.J."/>
            <person name="Wawrik B."/>
        </authorList>
    </citation>
    <scope>NUCLEOTIDE SEQUENCE [LARGE SCALE GENOMIC DNA]</scope>
    <source>
        <strain>AK-01</strain>
    </source>
</reference>
<accession>B8FB83</accession>
<sequence length="430" mass="46377">MANIVVVGTQWGDEGKGKIVDMLAEKADMVTRFQGGNNAGHTVVVDGTQTITHLIPSGILQNKTCLIGNGVVVDPKVLLEEVDKLLGMGVEINADNLLISERAQIIMPYHQAMDHAREAKKGAQKIGTTGRGIGPCYEDKAARKGVRFVDLLDPAVFDSMVREACEEKNFLLTEFFKADPVDPDAIIAEYTEYAKRLAPHVVDVSVVLNQGVKDGKQVLFEGAQGTHLDIDHGTYPFVTSSNTVAGNVCAGSGVGPGQVNEVLGIVKAYTTRVGMGPFPTELEDEVGNRIQEKGAEFGATTGRRRRCGWLDMVLLEATARLNGLTGVAITKLDVLGGLDSLNICTAYECEGETLNFFPADLKVLAKCKPVYETMPGWTEDISGVRNFDDLPENARNYLNRVEELLGAPIKIISVGPGRDETMVVKDPFAG</sequence>
<comment type="function">
    <text evidence="1">Plays an important role in the de novo pathway of purine nucleotide biosynthesis. Catalyzes the first committed step in the biosynthesis of AMP from IMP.</text>
</comment>
<comment type="catalytic activity">
    <reaction evidence="1">
        <text>IMP + L-aspartate + GTP = N(6)-(1,2-dicarboxyethyl)-AMP + GDP + phosphate + 2 H(+)</text>
        <dbReference type="Rhea" id="RHEA:15753"/>
        <dbReference type="ChEBI" id="CHEBI:15378"/>
        <dbReference type="ChEBI" id="CHEBI:29991"/>
        <dbReference type="ChEBI" id="CHEBI:37565"/>
        <dbReference type="ChEBI" id="CHEBI:43474"/>
        <dbReference type="ChEBI" id="CHEBI:57567"/>
        <dbReference type="ChEBI" id="CHEBI:58053"/>
        <dbReference type="ChEBI" id="CHEBI:58189"/>
        <dbReference type="EC" id="6.3.4.4"/>
    </reaction>
</comment>
<comment type="cofactor">
    <cofactor evidence="1">
        <name>Mg(2+)</name>
        <dbReference type="ChEBI" id="CHEBI:18420"/>
    </cofactor>
    <text evidence="1">Binds 1 Mg(2+) ion per subunit.</text>
</comment>
<comment type="pathway">
    <text evidence="1">Purine metabolism; AMP biosynthesis via de novo pathway; AMP from IMP: step 1/2.</text>
</comment>
<comment type="subunit">
    <text evidence="1">Homodimer.</text>
</comment>
<comment type="subcellular location">
    <subcellularLocation>
        <location evidence="1">Cytoplasm</location>
    </subcellularLocation>
</comment>
<comment type="similarity">
    <text evidence="1">Belongs to the adenylosuccinate synthetase family.</text>
</comment>
<feature type="chain" id="PRO_1000194746" description="Adenylosuccinate synthetase">
    <location>
        <begin position="1"/>
        <end position="430"/>
    </location>
</feature>
<feature type="active site" description="Proton acceptor" evidence="1">
    <location>
        <position position="13"/>
    </location>
</feature>
<feature type="active site" description="Proton donor" evidence="1">
    <location>
        <position position="41"/>
    </location>
</feature>
<feature type="binding site" evidence="1">
    <location>
        <begin position="12"/>
        <end position="18"/>
    </location>
    <ligand>
        <name>GTP</name>
        <dbReference type="ChEBI" id="CHEBI:37565"/>
    </ligand>
</feature>
<feature type="binding site" description="in other chain" evidence="1">
    <location>
        <begin position="13"/>
        <end position="16"/>
    </location>
    <ligand>
        <name>IMP</name>
        <dbReference type="ChEBI" id="CHEBI:58053"/>
        <note>ligand shared between dimeric partners</note>
    </ligand>
</feature>
<feature type="binding site" evidence="1">
    <location>
        <position position="13"/>
    </location>
    <ligand>
        <name>Mg(2+)</name>
        <dbReference type="ChEBI" id="CHEBI:18420"/>
    </ligand>
</feature>
<feature type="binding site" description="in other chain" evidence="1">
    <location>
        <begin position="38"/>
        <end position="41"/>
    </location>
    <ligand>
        <name>IMP</name>
        <dbReference type="ChEBI" id="CHEBI:58053"/>
        <note>ligand shared between dimeric partners</note>
    </ligand>
</feature>
<feature type="binding site" evidence="1">
    <location>
        <begin position="40"/>
        <end position="42"/>
    </location>
    <ligand>
        <name>GTP</name>
        <dbReference type="ChEBI" id="CHEBI:37565"/>
    </ligand>
</feature>
<feature type="binding site" evidence="1">
    <location>
        <position position="40"/>
    </location>
    <ligand>
        <name>Mg(2+)</name>
        <dbReference type="ChEBI" id="CHEBI:18420"/>
    </ligand>
</feature>
<feature type="binding site" description="in other chain" evidence="1">
    <location>
        <position position="129"/>
    </location>
    <ligand>
        <name>IMP</name>
        <dbReference type="ChEBI" id="CHEBI:58053"/>
        <note>ligand shared between dimeric partners</note>
    </ligand>
</feature>
<feature type="binding site" evidence="1">
    <location>
        <position position="143"/>
    </location>
    <ligand>
        <name>IMP</name>
        <dbReference type="ChEBI" id="CHEBI:58053"/>
        <note>ligand shared between dimeric partners</note>
    </ligand>
</feature>
<feature type="binding site" description="in other chain" evidence="1">
    <location>
        <position position="224"/>
    </location>
    <ligand>
        <name>IMP</name>
        <dbReference type="ChEBI" id="CHEBI:58053"/>
        <note>ligand shared between dimeric partners</note>
    </ligand>
</feature>
<feature type="binding site" description="in other chain" evidence="1">
    <location>
        <position position="239"/>
    </location>
    <ligand>
        <name>IMP</name>
        <dbReference type="ChEBI" id="CHEBI:58053"/>
        <note>ligand shared between dimeric partners</note>
    </ligand>
</feature>
<feature type="binding site" evidence="1">
    <location>
        <begin position="299"/>
        <end position="305"/>
    </location>
    <ligand>
        <name>substrate</name>
    </ligand>
</feature>
<feature type="binding site" description="in other chain" evidence="1">
    <location>
        <position position="303"/>
    </location>
    <ligand>
        <name>IMP</name>
        <dbReference type="ChEBI" id="CHEBI:58053"/>
        <note>ligand shared between dimeric partners</note>
    </ligand>
</feature>
<feature type="binding site" evidence="1">
    <location>
        <position position="305"/>
    </location>
    <ligand>
        <name>GTP</name>
        <dbReference type="ChEBI" id="CHEBI:37565"/>
    </ligand>
</feature>
<feature type="binding site" evidence="1">
    <location>
        <begin position="331"/>
        <end position="333"/>
    </location>
    <ligand>
        <name>GTP</name>
        <dbReference type="ChEBI" id="CHEBI:37565"/>
    </ligand>
</feature>
<feature type="binding site" evidence="1">
    <location>
        <begin position="413"/>
        <end position="415"/>
    </location>
    <ligand>
        <name>GTP</name>
        <dbReference type="ChEBI" id="CHEBI:37565"/>
    </ligand>
</feature>
<proteinExistence type="inferred from homology"/>
<keyword id="KW-0963">Cytoplasm</keyword>
<keyword id="KW-0342">GTP-binding</keyword>
<keyword id="KW-0436">Ligase</keyword>
<keyword id="KW-0460">Magnesium</keyword>
<keyword id="KW-0479">Metal-binding</keyword>
<keyword id="KW-0547">Nucleotide-binding</keyword>
<keyword id="KW-0658">Purine biosynthesis</keyword>
<keyword id="KW-1185">Reference proteome</keyword>
<dbReference type="EC" id="6.3.4.4" evidence="1"/>
<dbReference type="EMBL" id="CP001322">
    <property type="protein sequence ID" value="ACL04527.1"/>
    <property type="molecule type" value="Genomic_DNA"/>
</dbReference>
<dbReference type="RefSeq" id="WP_015947597.1">
    <property type="nucleotide sequence ID" value="NC_011768.1"/>
</dbReference>
<dbReference type="SMR" id="B8FB83"/>
<dbReference type="KEGG" id="dal:Dalk_2837"/>
<dbReference type="eggNOG" id="COG0104">
    <property type="taxonomic scope" value="Bacteria"/>
</dbReference>
<dbReference type="HOGENOM" id="CLU_029848_0_0_7"/>
<dbReference type="UniPathway" id="UPA00075">
    <property type="reaction ID" value="UER00335"/>
</dbReference>
<dbReference type="Proteomes" id="UP000000739">
    <property type="component" value="Chromosome"/>
</dbReference>
<dbReference type="GO" id="GO:0005737">
    <property type="term" value="C:cytoplasm"/>
    <property type="evidence" value="ECO:0007669"/>
    <property type="project" value="UniProtKB-SubCell"/>
</dbReference>
<dbReference type="GO" id="GO:0004019">
    <property type="term" value="F:adenylosuccinate synthase activity"/>
    <property type="evidence" value="ECO:0007669"/>
    <property type="project" value="UniProtKB-UniRule"/>
</dbReference>
<dbReference type="GO" id="GO:0005525">
    <property type="term" value="F:GTP binding"/>
    <property type="evidence" value="ECO:0007669"/>
    <property type="project" value="UniProtKB-UniRule"/>
</dbReference>
<dbReference type="GO" id="GO:0000287">
    <property type="term" value="F:magnesium ion binding"/>
    <property type="evidence" value="ECO:0007669"/>
    <property type="project" value="UniProtKB-UniRule"/>
</dbReference>
<dbReference type="GO" id="GO:0044208">
    <property type="term" value="P:'de novo' AMP biosynthetic process"/>
    <property type="evidence" value="ECO:0007669"/>
    <property type="project" value="UniProtKB-UniRule"/>
</dbReference>
<dbReference type="GO" id="GO:0046040">
    <property type="term" value="P:IMP metabolic process"/>
    <property type="evidence" value="ECO:0007669"/>
    <property type="project" value="TreeGrafter"/>
</dbReference>
<dbReference type="CDD" id="cd03108">
    <property type="entry name" value="AdSS"/>
    <property type="match status" value="1"/>
</dbReference>
<dbReference type="FunFam" id="1.10.300.10:FF:000001">
    <property type="entry name" value="Adenylosuccinate synthetase"/>
    <property type="match status" value="1"/>
</dbReference>
<dbReference type="FunFam" id="3.90.170.10:FF:000001">
    <property type="entry name" value="Adenylosuccinate synthetase"/>
    <property type="match status" value="1"/>
</dbReference>
<dbReference type="Gene3D" id="3.40.440.10">
    <property type="entry name" value="Adenylosuccinate Synthetase, subunit A, domain 1"/>
    <property type="match status" value="1"/>
</dbReference>
<dbReference type="Gene3D" id="1.10.300.10">
    <property type="entry name" value="Adenylosuccinate Synthetase, subunit A, domain 2"/>
    <property type="match status" value="1"/>
</dbReference>
<dbReference type="Gene3D" id="3.90.170.10">
    <property type="entry name" value="Adenylosuccinate Synthetase, subunit A, domain 3"/>
    <property type="match status" value="1"/>
</dbReference>
<dbReference type="HAMAP" id="MF_00011">
    <property type="entry name" value="Adenylosucc_synth"/>
    <property type="match status" value="1"/>
</dbReference>
<dbReference type="InterPro" id="IPR018220">
    <property type="entry name" value="Adenylosuccin_syn_GTP-bd"/>
</dbReference>
<dbReference type="InterPro" id="IPR033128">
    <property type="entry name" value="Adenylosuccin_syn_Lys_AS"/>
</dbReference>
<dbReference type="InterPro" id="IPR042109">
    <property type="entry name" value="Adenylosuccinate_synth_dom1"/>
</dbReference>
<dbReference type="InterPro" id="IPR042110">
    <property type="entry name" value="Adenylosuccinate_synth_dom2"/>
</dbReference>
<dbReference type="InterPro" id="IPR042111">
    <property type="entry name" value="Adenylosuccinate_synth_dom3"/>
</dbReference>
<dbReference type="InterPro" id="IPR001114">
    <property type="entry name" value="Adenylosuccinate_synthetase"/>
</dbReference>
<dbReference type="InterPro" id="IPR027417">
    <property type="entry name" value="P-loop_NTPase"/>
</dbReference>
<dbReference type="NCBIfam" id="NF002223">
    <property type="entry name" value="PRK01117.1"/>
    <property type="match status" value="1"/>
</dbReference>
<dbReference type="NCBIfam" id="TIGR00184">
    <property type="entry name" value="purA"/>
    <property type="match status" value="1"/>
</dbReference>
<dbReference type="PANTHER" id="PTHR11846">
    <property type="entry name" value="ADENYLOSUCCINATE SYNTHETASE"/>
    <property type="match status" value="1"/>
</dbReference>
<dbReference type="PANTHER" id="PTHR11846:SF0">
    <property type="entry name" value="ADENYLOSUCCINATE SYNTHETASE"/>
    <property type="match status" value="1"/>
</dbReference>
<dbReference type="Pfam" id="PF00709">
    <property type="entry name" value="Adenylsucc_synt"/>
    <property type="match status" value="1"/>
</dbReference>
<dbReference type="SMART" id="SM00788">
    <property type="entry name" value="Adenylsucc_synt"/>
    <property type="match status" value="1"/>
</dbReference>
<dbReference type="SUPFAM" id="SSF52540">
    <property type="entry name" value="P-loop containing nucleoside triphosphate hydrolases"/>
    <property type="match status" value="1"/>
</dbReference>
<dbReference type="PROSITE" id="PS01266">
    <property type="entry name" value="ADENYLOSUCCIN_SYN_1"/>
    <property type="match status" value="1"/>
</dbReference>
<dbReference type="PROSITE" id="PS00513">
    <property type="entry name" value="ADENYLOSUCCIN_SYN_2"/>
    <property type="match status" value="1"/>
</dbReference>
<name>PURA_DESAL</name>
<gene>
    <name evidence="1" type="primary">purA</name>
    <name type="ordered locus">Dalk_2837</name>
</gene>
<organism>
    <name type="scientific">Desulfatibacillum aliphaticivorans</name>
    <dbReference type="NCBI Taxonomy" id="218208"/>
    <lineage>
        <taxon>Bacteria</taxon>
        <taxon>Pseudomonadati</taxon>
        <taxon>Thermodesulfobacteriota</taxon>
        <taxon>Desulfobacteria</taxon>
        <taxon>Desulfobacterales</taxon>
        <taxon>Desulfatibacillaceae</taxon>
        <taxon>Desulfatibacillum</taxon>
    </lineage>
</organism>
<evidence type="ECO:0000255" key="1">
    <source>
        <dbReference type="HAMAP-Rule" id="MF_00011"/>
    </source>
</evidence>